<reference key="1">
    <citation type="journal article" date="2013" name="Nature">
        <title>The zebrafish reference genome sequence and its relationship to the human genome.</title>
        <authorList>
            <person name="Howe K."/>
            <person name="Clark M.D."/>
            <person name="Torroja C.F."/>
            <person name="Torrance J."/>
            <person name="Berthelot C."/>
            <person name="Muffato M."/>
            <person name="Collins J.E."/>
            <person name="Humphray S."/>
            <person name="McLaren K."/>
            <person name="Matthews L."/>
            <person name="McLaren S."/>
            <person name="Sealy I."/>
            <person name="Caccamo M."/>
            <person name="Churcher C."/>
            <person name="Scott C."/>
            <person name="Barrett J.C."/>
            <person name="Koch R."/>
            <person name="Rauch G.J."/>
            <person name="White S."/>
            <person name="Chow W."/>
            <person name="Kilian B."/>
            <person name="Quintais L.T."/>
            <person name="Guerra-Assuncao J.A."/>
            <person name="Zhou Y."/>
            <person name="Gu Y."/>
            <person name="Yen J."/>
            <person name="Vogel J.H."/>
            <person name="Eyre T."/>
            <person name="Redmond S."/>
            <person name="Banerjee R."/>
            <person name="Chi J."/>
            <person name="Fu B."/>
            <person name="Langley E."/>
            <person name="Maguire S.F."/>
            <person name="Laird G.K."/>
            <person name="Lloyd D."/>
            <person name="Kenyon E."/>
            <person name="Donaldson S."/>
            <person name="Sehra H."/>
            <person name="Almeida-King J."/>
            <person name="Loveland J."/>
            <person name="Trevanion S."/>
            <person name="Jones M."/>
            <person name="Quail M."/>
            <person name="Willey D."/>
            <person name="Hunt A."/>
            <person name="Burton J."/>
            <person name="Sims S."/>
            <person name="McLay K."/>
            <person name="Plumb B."/>
            <person name="Davis J."/>
            <person name="Clee C."/>
            <person name="Oliver K."/>
            <person name="Clark R."/>
            <person name="Riddle C."/>
            <person name="Elliot D."/>
            <person name="Threadgold G."/>
            <person name="Harden G."/>
            <person name="Ware D."/>
            <person name="Begum S."/>
            <person name="Mortimore B."/>
            <person name="Kerry G."/>
            <person name="Heath P."/>
            <person name="Phillimore B."/>
            <person name="Tracey A."/>
            <person name="Corby N."/>
            <person name="Dunn M."/>
            <person name="Johnson C."/>
            <person name="Wood J."/>
            <person name="Clark S."/>
            <person name="Pelan S."/>
            <person name="Griffiths G."/>
            <person name="Smith M."/>
            <person name="Glithero R."/>
            <person name="Howden P."/>
            <person name="Barker N."/>
            <person name="Lloyd C."/>
            <person name="Stevens C."/>
            <person name="Harley J."/>
            <person name="Holt K."/>
            <person name="Panagiotidis G."/>
            <person name="Lovell J."/>
            <person name="Beasley H."/>
            <person name="Henderson C."/>
            <person name="Gordon D."/>
            <person name="Auger K."/>
            <person name="Wright D."/>
            <person name="Collins J."/>
            <person name="Raisen C."/>
            <person name="Dyer L."/>
            <person name="Leung K."/>
            <person name="Robertson L."/>
            <person name="Ambridge K."/>
            <person name="Leongamornlert D."/>
            <person name="McGuire S."/>
            <person name="Gilderthorp R."/>
            <person name="Griffiths C."/>
            <person name="Manthravadi D."/>
            <person name="Nichol S."/>
            <person name="Barker G."/>
            <person name="Whitehead S."/>
            <person name="Kay M."/>
            <person name="Brown J."/>
            <person name="Murnane C."/>
            <person name="Gray E."/>
            <person name="Humphries M."/>
            <person name="Sycamore N."/>
            <person name="Barker D."/>
            <person name="Saunders D."/>
            <person name="Wallis J."/>
            <person name="Babbage A."/>
            <person name="Hammond S."/>
            <person name="Mashreghi-Mohammadi M."/>
            <person name="Barr L."/>
            <person name="Martin S."/>
            <person name="Wray P."/>
            <person name="Ellington A."/>
            <person name="Matthews N."/>
            <person name="Ellwood M."/>
            <person name="Woodmansey R."/>
            <person name="Clark G."/>
            <person name="Cooper J."/>
            <person name="Tromans A."/>
            <person name="Grafham D."/>
            <person name="Skuce C."/>
            <person name="Pandian R."/>
            <person name="Andrews R."/>
            <person name="Harrison E."/>
            <person name="Kimberley A."/>
            <person name="Garnett J."/>
            <person name="Fosker N."/>
            <person name="Hall R."/>
            <person name="Garner P."/>
            <person name="Kelly D."/>
            <person name="Bird C."/>
            <person name="Palmer S."/>
            <person name="Gehring I."/>
            <person name="Berger A."/>
            <person name="Dooley C.M."/>
            <person name="Ersan-Urun Z."/>
            <person name="Eser C."/>
            <person name="Geiger H."/>
            <person name="Geisler M."/>
            <person name="Karotki L."/>
            <person name="Kirn A."/>
            <person name="Konantz J."/>
            <person name="Konantz M."/>
            <person name="Oberlander M."/>
            <person name="Rudolph-Geiger S."/>
            <person name="Teucke M."/>
            <person name="Lanz C."/>
            <person name="Raddatz G."/>
            <person name="Osoegawa K."/>
            <person name="Zhu B."/>
            <person name="Rapp A."/>
            <person name="Widaa S."/>
            <person name="Langford C."/>
            <person name="Yang F."/>
            <person name="Schuster S.C."/>
            <person name="Carter N.P."/>
            <person name="Harrow J."/>
            <person name="Ning Z."/>
            <person name="Herrero J."/>
            <person name="Searle S.M."/>
            <person name="Enright A."/>
            <person name="Geisler R."/>
            <person name="Plasterk R.H."/>
            <person name="Lee C."/>
            <person name="Westerfield M."/>
            <person name="de Jong P.J."/>
            <person name="Zon L.I."/>
            <person name="Postlethwait J.H."/>
            <person name="Nusslein-Volhard C."/>
            <person name="Hubbard T.J."/>
            <person name="Roest Crollius H."/>
            <person name="Rogers J."/>
            <person name="Stemple D.L."/>
        </authorList>
    </citation>
    <scope>NUCLEOTIDE SEQUENCE [LARGE SCALE GENOMIC DNA]</scope>
    <source>
        <strain>Tuebingen</strain>
    </source>
</reference>
<reference key="2">
    <citation type="submission" date="2007-03" db="EMBL/GenBank/DDBJ databases">
        <authorList>
            <consortium name="NIH - Zebrafish Gene Collection (ZGC) project"/>
        </authorList>
    </citation>
    <scope>NUCLEOTIDE SEQUENCE [LARGE SCALE MRNA] (ISOFORM 1)</scope>
    <source>
        <tissue>Embryo</tissue>
    </source>
</reference>
<protein>
    <recommendedName>
        <fullName>Coiled-coil domain-containing protein 167</fullName>
    </recommendedName>
</protein>
<proteinExistence type="predicted"/>
<keyword id="KW-0025">Alternative splicing</keyword>
<keyword id="KW-0175">Coiled coil</keyword>
<keyword id="KW-0472">Membrane</keyword>
<keyword id="KW-1185">Reference proteome</keyword>
<keyword id="KW-0812">Transmembrane</keyword>
<keyword id="KW-1133">Transmembrane helix</keyword>
<gene>
    <name type="primary">ccdc167</name>
    <name type="ORF">si:ch211-214j24.7</name>
</gene>
<dbReference type="EMBL" id="BX323558">
    <property type="protein sequence ID" value="CAI11786.2"/>
    <property type="molecule type" value="Genomic_DNA"/>
</dbReference>
<dbReference type="EMBL" id="BX323558">
    <property type="protein sequence ID" value="CAQ14315.1"/>
    <property type="molecule type" value="Genomic_DNA"/>
</dbReference>
<dbReference type="EMBL" id="BC133988">
    <property type="protein sequence ID" value="AAI33989.1"/>
    <property type="molecule type" value="mRNA"/>
</dbReference>
<dbReference type="RefSeq" id="NP_001315525.1">
    <molecule id="Q5RHZ2-1"/>
    <property type="nucleotide sequence ID" value="NM_001328596.1"/>
</dbReference>
<dbReference type="SMR" id="Q5RHZ2"/>
<dbReference type="FunCoup" id="Q5RHZ2">
    <property type="interactions" value="1652"/>
</dbReference>
<dbReference type="STRING" id="7955.ENSDARP00000118096"/>
<dbReference type="PaxDb" id="7955-ENSDARP00000067379"/>
<dbReference type="Ensembl" id="ENSDART00000137966">
    <molecule id="Q5RHZ2-1"/>
    <property type="protein sequence ID" value="ENSDARP00000118096"/>
    <property type="gene ID" value="ENSDARG00000045850"/>
</dbReference>
<dbReference type="Ensembl" id="ENSDART00000144658">
    <molecule id="Q5RHZ2-1"/>
    <property type="protein sequence ID" value="ENSDARP00000117654"/>
    <property type="gene ID" value="ENSDARG00000045850"/>
</dbReference>
<dbReference type="GeneID" id="556080"/>
<dbReference type="KEGG" id="dre:556080"/>
<dbReference type="AGR" id="ZFIN:ZDB-GENE-041210-79"/>
<dbReference type="CTD" id="154467"/>
<dbReference type="ZFIN" id="ZDB-GENE-041210-79">
    <property type="gene designation" value="ccdc167"/>
</dbReference>
<dbReference type="eggNOG" id="ENOG502SAF4">
    <property type="taxonomic scope" value="Eukaryota"/>
</dbReference>
<dbReference type="HOGENOM" id="CLU_152032_0_0_1"/>
<dbReference type="InParanoid" id="Q5RHZ2"/>
<dbReference type="OMA" id="MAIMNER"/>
<dbReference type="OrthoDB" id="6435278at2759"/>
<dbReference type="PhylomeDB" id="Q5RHZ2"/>
<dbReference type="TreeFam" id="TF336097"/>
<dbReference type="PRO" id="PR:Q5RHZ2"/>
<dbReference type="Proteomes" id="UP000000437">
    <property type="component" value="Chromosome 4"/>
</dbReference>
<dbReference type="Bgee" id="ENSDARG00000045850">
    <property type="expression patterns" value="Expressed in granulocyte and 29 other cell types or tissues"/>
</dbReference>
<dbReference type="GO" id="GO:0016020">
    <property type="term" value="C:membrane"/>
    <property type="evidence" value="ECO:0007669"/>
    <property type="project" value="UniProtKB-SubCell"/>
</dbReference>
<dbReference type="InterPro" id="IPR028194">
    <property type="entry name" value="CCDC-167"/>
</dbReference>
<dbReference type="PANTHER" id="PTHR31759">
    <property type="entry name" value="COILED-COIL DOMAIN-CONTAINING PROTEIN 167"/>
    <property type="match status" value="1"/>
</dbReference>
<dbReference type="PANTHER" id="PTHR31759:SF1">
    <property type="entry name" value="COILED-COIL DOMAIN-CONTAINING PROTEIN 167"/>
    <property type="match status" value="1"/>
</dbReference>
<dbReference type="Pfam" id="PF15188">
    <property type="entry name" value="CCDC-167"/>
    <property type="match status" value="1"/>
</dbReference>
<organism>
    <name type="scientific">Danio rerio</name>
    <name type="common">Zebrafish</name>
    <name type="synonym">Brachydanio rerio</name>
    <dbReference type="NCBI Taxonomy" id="7955"/>
    <lineage>
        <taxon>Eukaryota</taxon>
        <taxon>Metazoa</taxon>
        <taxon>Chordata</taxon>
        <taxon>Craniata</taxon>
        <taxon>Vertebrata</taxon>
        <taxon>Euteleostomi</taxon>
        <taxon>Actinopterygii</taxon>
        <taxon>Neopterygii</taxon>
        <taxon>Teleostei</taxon>
        <taxon>Ostariophysi</taxon>
        <taxon>Cypriniformes</taxon>
        <taxon>Danionidae</taxon>
        <taxon>Danioninae</taxon>
        <taxon>Danio</taxon>
    </lineage>
</organism>
<evidence type="ECO:0000255" key="1"/>
<evidence type="ECO:0000305" key="2"/>
<comment type="subcellular location">
    <subcellularLocation>
        <location evidence="2">Membrane</location>
        <topology evidence="2">Single-pass membrane protein</topology>
    </subcellularLocation>
</comment>
<comment type="alternative products">
    <event type="alternative splicing"/>
    <isoform>
        <id>Q5RHZ2-1</id>
        <name>1</name>
        <sequence type="displayed"/>
    </isoform>
    <isoform>
        <id>Q5RHZ2-2</id>
        <name>2</name>
        <sequence type="described" ref="VSP_034840"/>
    </isoform>
</comment>
<name>CC167_DANRE</name>
<accession>Q5RHZ2</accession>
<accession>A3KNS5</accession>
<accession>B0S617</accession>
<feature type="chain" id="PRO_0000308552" description="Coiled-coil domain-containing protein 167">
    <location>
        <begin position="1"/>
        <end position="100"/>
    </location>
</feature>
<feature type="transmembrane region" description="Helical" evidence="1">
    <location>
        <begin position="82"/>
        <end position="99"/>
    </location>
</feature>
<feature type="coiled-coil region" evidence="1">
    <location>
        <begin position="14"/>
        <end position="81"/>
    </location>
</feature>
<feature type="splice variant" id="VSP_034840" description="In isoform 2." evidence="2">
    <original>EKDLQVLRGENRRNMMLSVALLAISALFYYTFIY</original>
    <variation>GIYGPRLTPSRFPSTF</variation>
    <location>
        <begin position="67"/>
        <end position="100"/>
    </location>
</feature>
<feature type="sequence conflict" description="In Ref. 2; AAI33989." evidence="2" ref="2">
    <original>E</original>
    <variation>G</variation>
    <location>
        <position position="10"/>
    </location>
</feature>
<sequence length="100" mass="12007">MTRTRTVKKEKISVASEIDRVEERKLQCKNSLERAEFRKRKQQLSDDDRLALEDEMTILNERVEKYEKDLQVLRGENRRNMMLSVALLAISALFYYTFIY</sequence>